<keyword id="KW-0044">Antibiotic</keyword>
<keyword id="KW-0929">Antimicrobial</keyword>
<keyword id="KW-0211">Defensin</keyword>
<keyword id="KW-0903">Direct protein sequencing</keyword>
<keyword id="KW-1015">Disulfide bond</keyword>
<keyword id="KW-0964">Secreted</keyword>
<feature type="peptide" id="PRO_0000284753" description="Ostricacin-4" evidence="3">
    <location>
        <begin position="1"/>
        <end position="42" status="greater than"/>
    </location>
</feature>
<feature type="disulfide bond" evidence="1">
    <location>
        <begin position="8"/>
        <end position="36"/>
    </location>
</feature>
<feature type="disulfide bond" evidence="1">
    <location>
        <begin position="15"/>
        <end position="30"/>
    </location>
</feature>
<feature type="disulfide bond" evidence="1">
    <location>
        <begin position="20"/>
        <end position="37"/>
    </location>
</feature>
<feature type="non-terminal residue" evidence="4">
    <location>
        <position position="42"/>
    </location>
</feature>
<sequence length="42" mass="4755">LPVNEAQCRQVGGYCGLRICNFPSRFLGLCTRNHPCCSRVWV</sequence>
<comment type="function">
    <text evidence="3">Has antibacterial activity against the Gram-positive bacterium S.aureus 1056 MRSA (MIC=11.48 ug/ml) and the Gram-negative bacterium E.coli O157:H7 (MIC=12.03 ug/ml). Does not have antifungal activity against the yeast C.albicans 3153A.</text>
</comment>
<comment type="subcellular location">
    <subcellularLocation>
        <location>Secreted</location>
    </subcellularLocation>
</comment>
<comment type="mass spectrometry" mass="4752.4" method="MALDI" evidence="3"/>
<comment type="similarity">
    <text evidence="2">Belongs to the beta-defensin family.</text>
</comment>
<name>OSTR4_STRCA</name>
<evidence type="ECO:0000250" key="1">
    <source>
        <dbReference type="UniProtKB" id="P83430"/>
    </source>
</evidence>
<evidence type="ECO:0000255" key="2"/>
<evidence type="ECO:0000269" key="3">
    <source>
    </source>
</evidence>
<evidence type="ECO:0000303" key="4">
    <source>
    </source>
</evidence>
<evidence type="ECO:0000305" key="5"/>
<protein>
    <recommendedName>
        <fullName>Ostricacin-4</fullName>
    </recommendedName>
    <alternativeName>
        <fullName>Beta-defensin 8</fullName>
    </alternativeName>
</protein>
<reference evidence="5" key="1">
    <citation type="journal article" date="2006" name="Int. J. Antimicrob. Agents">
        <title>Identification of three novel ostricacins: an update on the phylogenetic perspective of beta-defensins.</title>
        <authorList>
            <person name="Sugiarto H."/>
            <person name="Yu P.-L."/>
        </authorList>
    </citation>
    <scope>PROTEIN SEQUENCE</scope>
    <scope>FUNCTION</scope>
    <scope>MASS SPECTROMETRY</scope>
    <source>
        <tissue evidence="3">Blood</tissue>
    </source>
</reference>
<proteinExistence type="evidence at protein level"/>
<accession>P85116</accession>
<dbReference type="SMR" id="P85116"/>
<dbReference type="GO" id="GO:0005576">
    <property type="term" value="C:extracellular region"/>
    <property type="evidence" value="ECO:0007669"/>
    <property type="project" value="UniProtKB-SubCell"/>
</dbReference>
<dbReference type="GO" id="GO:0042742">
    <property type="term" value="P:defense response to bacterium"/>
    <property type="evidence" value="ECO:0007669"/>
    <property type="project" value="UniProtKB-KW"/>
</dbReference>
<dbReference type="InterPro" id="IPR001855">
    <property type="entry name" value="Defensin_beta-like"/>
</dbReference>
<dbReference type="Pfam" id="PF00711">
    <property type="entry name" value="Defensin_beta"/>
    <property type="match status" value="1"/>
</dbReference>
<dbReference type="SUPFAM" id="SSF57392">
    <property type="entry name" value="Defensin-like"/>
    <property type="match status" value="1"/>
</dbReference>
<organism>
    <name type="scientific">Struthio camelus</name>
    <name type="common">Common ostrich</name>
    <dbReference type="NCBI Taxonomy" id="8801"/>
    <lineage>
        <taxon>Eukaryota</taxon>
        <taxon>Metazoa</taxon>
        <taxon>Chordata</taxon>
        <taxon>Craniata</taxon>
        <taxon>Vertebrata</taxon>
        <taxon>Euteleostomi</taxon>
        <taxon>Archelosauria</taxon>
        <taxon>Archosauria</taxon>
        <taxon>Dinosauria</taxon>
        <taxon>Saurischia</taxon>
        <taxon>Theropoda</taxon>
        <taxon>Coelurosauria</taxon>
        <taxon>Aves</taxon>
        <taxon>Palaeognathae</taxon>
        <taxon>Struthioniformes</taxon>
        <taxon>Struthionidae</taxon>
        <taxon>Struthio</taxon>
    </lineage>
</organism>